<gene>
    <name evidence="1" type="primary">clpP2</name>
    <name type="ordered locus">BT9727_4829</name>
</gene>
<keyword id="KW-0963">Cytoplasm</keyword>
<keyword id="KW-0378">Hydrolase</keyword>
<keyword id="KW-0645">Protease</keyword>
<keyword id="KW-0720">Serine protease</keyword>
<comment type="function">
    <text evidence="1">Cleaves peptides in various proteins in a process that requires ATP hydrolysis. Has a chymotrypsin-like activity. Plays a major role in the degradation of misfolded proteins.</text>
</comment>
<comment type="catalytic activity">
    <reaction evidence="1">
        <text>Hydrolysis of proteins to small peptides in the presence of ATP and magnesium. alpha-casein is the usual test substrate. In the absence of ATP, only oligopeptides shorter than five residues are hydrolyzed (such as succinyl-Leu-Tyr-|-NHMec, and Leu-Tyr-Leu-|-Tyr-Trp, in which cleavage of the -Tyr-|-Leu- and -Tyr-|-Trp bonds also occurs).</text>
        <dbReference type="EC" id="3.4.21.92"/>
    </reaction>
</comment>
<comment type="subunit">
    <text evidence="1">Fourteen ClpP subunits assemble into 2 heptameric rings which stack back to back to give a disk-like structure with a central cavity, resembling the structure of eukaryotic proteasomes.</text>
</comment>
<comment type="subcellular location">
    <subcellularLocation>
        <location evidence="1">Cytoplasm</location>
    </subcellularLocation>
</comment>
<comment type="similarity">
    <text evidence="1">Belongs to the peptidase S14 family.</text>
</comment>
<evidence type="ECO:0000255" key="1">
    <source>
        <dbReference type="HAMAP-Rule" id="MF_00444"/>
    </source>
</evidence>
<sequence length="193" mass="21420">MNLIPTVIEQTNRGERAYDIYSRLLKDRIIMLGSAIDDNVANSIVSQLLFLESQDPEKDIHIYINSPGGSITAGMAIYDTMQFIKPQVSTICIGMAASMGAFLLAAGEKGKRYALPNSEVMIHQPLGGAQGQATEIEIAAKRILFLREKLNQILADRTGQPLEVLQRDTDRDNFMTAEKALEYGLIDKIFTNR</sequence>
<reference key="1">
    <citation type="journal article" date="2006" name="J. Bacteriol.">
        <title>Pathogenomic sequence analysis of Bacillus cereus and Bacillus thuringiensis isolates closely related to Bacillus anthracis.</title>
        <authorList>
            <person name="Han C.S."/>
            <person name="Xie G."/>
            <person name="Challacombe J.F."/>
            <person name="Altherr M.R."/>
            <person name="Bhotika S.S."/>
            <person name="Bruce D."/>
            <person name="Campbell C.S."/>
            <person name="Campbell M.L."/>
            <person name="Chen J."/>
            <person name="Chertkov O."/>
            <person name="Cleland C."/>
            <person name="Dimitrijevic M."/>
            <person name="Doggett N.A."/>
            <person name="Fawcett J.J."/>
            <person name="Glavina T."/>
            <person name="Goodwin L.A."/>
            <person name="Hill K.K."/>
            <person name="Hitchcock P."/>
            <person name="Jackson P.J."/>
            <person name="Keim P."/>
            <person name="Kewalramani A.R."/>
            <person name="Longmire J."/>
            <person name="Lucas S."/>
            <person name="Malfatti S."/>
            <person name="McMurry K."/>
            <person name="Meincke L.J."/>
            <person name="Misra M."/>
            <person name="Moseman B.L."/>
            <person name="Mundt M."/>
            <person name="Munk A.C."/>
            <person name="Okinaka R.T."/>
            <person name="Parson-Quintana B."/>
            <person name="Reilly L.P."/>
            <person name="Richardson P."/>
            <person name="Robinson D.L."/>
            <person name="Rubin E."/>
            <person name="Saunders E."/>
            <person name="Tapia R."/>
            <person name="Tesmer J.G."/>
            <person name="Thayer N."/>
            <person name="Thompson L.S."/>
            <person name="Tice H."/>
            <person name="Ticknor L.O."/>
            <person name="Wills P.L."/>
            <person name="Brettin T.S."/>
            <person name="Gilna P."/>
        </authorList>
    </citation>
    <scope>NUCLEOTIDE SEQUENCE [LARGE SCALE GENOMIC DNA]</scope>
    <source>
        <strain>97-27</strain>
    </source>
</reference>
<name>CLPP2_BACHK</name>
<dbReference type="EC" id="3.4.21.92" evidence="1"/>
<dbReference type="EMBL" id="AE017355">
    <property type="protein sequence ID" value="AAT63332.1"/>
    <property type="molecule type" value="Genomic_DNA"/>
</dbReference>
<dbReference type="RefSeq" id="YP_039138.1">
    <property type="nucleotide sequence ID" value="NC_005957.1"/>
</dbReference>
<dbReference type="SMR" id="Q6HBD8"/>
<dbReference type="MEROPS" id="S14.001"/>
<dbReference type="KEGG" id="btk:BT9727_4829"/>
<dbReference type="PATRIC" id="fig|281309.8.peg.5135"/>
<dbReference type="HOGENOM" id="CLU_058707_3_2_9"/>
<dbReference type="Proteomes" id="UP000001301">
    <property type="component" value="Chromosome"/>
</dbReference>
<dbReference type="GO" id="GO:0005737">
    <property type="term" value="C:cytoplasm"/>
    <property type="evidence" value="ECO:0007669"/>
    <property type="project" value="UniProtKB-SubCell"/>
</dbReference>
<dbReference type="GO" id="GO:0009368">
    <property type="term" value="C:endopeptidase Clp complex"/>
    <property type="evidence" value="ECO:0007669"/>
    <property type="project" value="TreeGrafter"/>
</dbReference>
<dbReference type="GO" id="GO:0004176">
    <property type="term" value="F:ATP-dependent peptidase activity"/>
    <property type="evidence" value="ECO:0007669"/>
    <property type="project" value="InterPro"/>
</dbReference>
<dbReference type="GO" id="GO:0051117">
    <property type="term" value="F:ATPase binding"/>
    <property type="evidence" value="ECO:0007669"/>
    <property type="project" value="TreeGrafter"/>
</dbReference>
<dbReference type="GO" id="GO:0004252">
    <property type="term" value="F:serine-type endopeptidase activity"/>
    <property type="evidence" value="ECO:0007669"/>
    <property type="project" value="UniProtKB-UniRule"/>
</dbReference>
<dbReference type="GO" id="GO:0006515">
    <property type="term" value="P:protein quality control for misfolded or incompletely synthesized proteins"/>
    <property type="evidence" value="ECO:0007669"/>
    <property type="project" value="TreeGrafter"/>
</dbReference>
<dbReference type="CDD" id="cd07017">
    <property type="entry name" value="S14_ClpP_2"/>
    <property type="match status" value="1"/>
</dbReference>
<dbReference type="FunFam" id="3.90.226.10:FF:000001">
    <property type="entry name" value="ATP-dependent Clp protease proteolytic subunit"/>
    <property type="match status" value="1"/>
</dbReference>
<dbReference type="Gene3D" id="3.90.226.10">
    <property type="entry name" value="2-enoyl-CoA Hydratase, Chain A, domain 1"/>
    <property type="match status" value="1"/>
</dbReference>
<dbReference type="HAMAP" id="MF_00444">
    <property type="entry name" value="ClpP"/>
    <property type="match status" value="1"/>
</dbReference>
<dbReference type="InterPro" id="IPR001907">
    <property type="entry name" value="ClpP"/>
</dbReference>
<dbReference type="InterPro" id="IPR029045">
    <property type="entry name" value="ClpP/crotonase-like_dom_sf"/>
</dbReference>
<dbReference type="InterPro" id="IPR023562">
    <property type="entry name" value="ClpP/TepA"/>
</dbReference>
<dbReference type="InterPro" id="IPR033135">
    <property type="entry name" value="ClpP_His_AS"/>
</dbReference>
<dbReference type="InterPro" id="IPR018215">
    <property type="entry name" value="ClpP_Ser_AS"/>
</dbReference>
<dbReference type="NCBIfam" id="TIGR00493">
    <property type="entry name" value="clpP"/>
    <property type="match status" value="1"/>
</dbReference>
<dbReference type="NCBIfam" id="NF001368">
    <property type="entry name" value="PRK00277.1"/>
    <property type="match status" value="1"/>
</dbReference>
<dbReference type="NCBIfam" id="NF009205">
    <property type="entry name" value="PRK12553.1"/>
    <property type="match status" value="1"/>
</dbReference>
<dbReference type="PANTHER" id="PTHR10381">
    <property type="entry name" value="ATP-DEPENDENT CLP PROTEASE PROTEOLYTIC SUBUNIT"/>
    <property type="match status" value="1"/>
</dbReference>
<dbReference type="PANTHER" id="PTHR10381:SF70">
    <property type="entry name" value="ATP-DEPENDENT CLP PROTEASE PROTEOLYTIC SUBUNIT"/>
    <property type="match status" value="1"/>
</dbReference>
<dbReference type="Pfam" id="PF00574">
    <property type="entry name" value="CLP_protease"/>
    <property type="match status" value="1"/>
</dbReference>
<dbReference type="PRINTS" id="PR00127">
    <property type="entry name" value="CLPPROTEASEP"/>
</dbReference>
<dbReference type="SUPFAM" id="SSF52096">
    <property type="entry name" value="ClpP/crotonase"/>
    <property type="match status" value="1"/>
</dbReference>
<dbReference type="PROSITE" id="PS00382">
    <property type="entry name" value="CLP_PROTEASE_HIS"/>
    <property type="match status" value="1"/>
</dbReference>
<dbReference type="PROSITE" id="PS00381">
    <property type="entry name" value="CLP_PROTEASE_SER"/>
    <property type="match status" value="1"/>
</dbReference>
<organism>
    <name type="scientific">Bacillus thuringiensis subsp. konkukian (strain 97-27)</name>
    <dbReference type="NCBI Taxonomy" id="281309"/>
    <lineage>
        <taxon>Bacteria</taxon>
        <taxon>Bacillati</taxon>
        <taxon>Bacillota</taxon>
        <taxon>Bacilli</taxon>
        <taxon>Bacillales</taxon>
        <taxon>Bacillaceae</taxon>
        <taxon>Bacillus</taxon>
        <taxon>Bacillus cereus group</taxon>
    </lineage>
</organism>
<feature type="chain" id="PRO_0000179496" description="ATP-dependent Clp protease proteolytic subunit 2">
    <location>
        <begin position="1"/>
        <end position="193"/>
    </location>
</feature>
<feature type="active site" description="Nucleophile" evidence="1">
    <location>
        <position position="98"/>
    </location>
</feature>
<feature type="active site" evidence="1">
    <location>
        <position position="123"/>
    </location>
</feature>
<accession>Q6HBD8</accession>
<proteinExistence type="inferred from homology"/>
<protein>
    <recommendedName>
        <fullName evidence="1">ATP-dependent Clp protease proteolytic subunit 2</fullName>
        <ecNumber evidence="1">3.4.21.92</ecNumber>
    </recommendedName>
    <alternativeName>
        <fullName evidence="1">Endopeptidase Clp 2</fullName>
    </alternativeName>
</protein>